<dbReference type="EMBL" id="AF030557">
    <property type="protein sequence ID" value="AAB86623.1"/>
    <property type="molecule type" value="mRNA"/>
</dbReference>
<dbReference type="EMBL" id="AF139718">
    <property type="protein sequence ID" value="AAD25103.1"/>
    <property type="molecule type" value="Genomic_DNA"/>
</dbReference>
<dbReference type="SMR" id="O17450"/>
<dbReference type="GO" id="GO:0005576">
    <property type="term" value="C:extracellular region"/>
    <property type="evidence" value="ECO:0007669"/>
    <property type="project" value="InterPro"/>
</dbReference>
<dbReference type="GO" id="GO:0008061">
    <property type="term" value="F:chitin binding"/>
    <property type="evidence" value="ECO:0007669"/>
    <property type="project" value="UniProtKB-KW"/>
</dbReference>
<dbReference type="Gene3D" id="2.170.140.10">
    <property type="entry name" value="Chitin binding domain"/>
    <property type="match status" value="1"/>
</dbReference>
<dbReference type="InterPro" id="IPR002557">
    <property type="entry name" value="Chitin-bd_dom"/>
</dbReference>
<dbReference type="InterPro" id="IPR036508">
    <property type="entry name" value="Chitin-bd_dom_sf"/>
</dbReference>
<dbReference type="Pfam" id="PF01607">
    <property type="entry name" value="CBM_14"/>
    <property type="match status" value="4"/>
</dbReference>
<dbReference type="SMART" id="SM00494">
    <property type="entry name" value="ChtBD2"/>
    <property type="match status" value="5"/>
</dbReference>
<dbReference type="SUPFAM" id="SSF57625">
    <property type="entry name" value="Invertebrate chitin-binding proteins"/>
    <property type="match status" value="4"/>
</dbReference>
<dbReference type="PROSITE" id="PS50940">
    <property type="entry name" value="CHIT_BIND_II"/>
    <property type="match status" value="5"/>
</dbReference>
<accession>O17450</accession>
<accession>Q9XZF7</accession>
<feature type="signal peptide">
    <location>
        <begin position="1"/>
        <end position="20"/>
    </location>
</feature>
<feature type="chain" id="PRO_0000023614" description="Peritrophin-48">
    <location>
        <begin position="21"/>
        <end position="379"/>
    </location>
</feature>
<feature type="domain" description="Chitin-binding type-2 1" evidence="2">
    <location>
        <begin position="25"/>
        <end position="83"/>
    </location>
</feature>
<feature type="domain" description="Chitin-binding type-2 2" evidence="2">
    <location>
        <begin position="86"/>
        <end position="143"/>
    </location>
</feature>
<feature type="domain" description="Chitin-binding type-2 3" evidence="2">
    <location>
        <begin position="151"/>
        <end position="208"/>
    </location>
</feature>
<feature type="domain" description="Chitin-binding type-2 4" evidence="2">
    <location>
        <begin position="224"/>
        <end position="283"/>
    </location>
</feature>
<feature type="domain" description="Chitin-binding type-2 5" evidence="2">
    <location>
        <begin position="285"/>
        <end position="356"/>
    </location>
</feature>
<feature type="glycosylation site" description="N-linked (GlcNAc...) asparagine" evidence="1">
    <location>
        <position position="150"/>
    </location>
</feature>
<feature type="glycosylation site" description="N-linked (GlcNAc...) asparagine" evidence="1">
    <location>
        <position position="168"/>
    </location>
</feature>
<feature type="glycosylation site" description="N-linked (GlcNAc...) asparagine" evidence="1">
    <location>
        <position position="247"/>
    </location>
</feature>
<feature type="glycosylation site" description="N-linked (GlcNAc...) asparagine" evidence="1">
    <location>
        <position position="252"/>
    </location>
</feature>
<feature type="glycosylation site" description="N-linked (GlcNAc...) asparagine" evidence="1">
    <location>
        <position position="341"/>
    </location>
</feature>
<feature type="glycosylation site" description="N-linked (GlcNAc...) asparagine" evidence="1">
    <location>
        <position position="356"/>
    </location>
</feature>
<feature type="glycosylation site" description="N-linked (GlcNAc...) asparagine" evidence="1">
    <location>
        <position position="373"/>
    </location>
</feature>
<feature type="disulfide bond" evidence="2">
    <location>
        <begin position="60"/>
        <end position="73"/>
    </location>
</feature>
<feature type="disulfide bond" evidence="2">
    <location>
        <begin position="120"/>
        <end position="133"/>
    </location>
</feature>
<feature type="disulfide bond" evidence="2">
    <location>
        <begin position="185"/>
        <end position="198"/>
    </location>
</feature>
<feature type="disulfide bond" evidence="2">
    <location>
        <begin position="324"/>
        <end position="337"/>
    </location>
</feature>
<feature type="sequence conflict" description="In Ref. 1; AAD25103." evidence="3" ref="1">
    <original>N</original>
    <variation>H</variation>
    <location>
        <position position="159"/>
    </location>
</feature>
<feature type="sequence conflict" description="In Ref. 1; AAD25103." evidence="3" ref="1">
    <original>K</original>
    <variation>T</variation>
    <location>
        <position position="167"/>
    </location>
</feature>
<feature type="sequence conflict" description="In Ref. 1; AAD25103." evidence="3" ref="1">
    <original>L</original>
    <variation>I</variation>
    <location>
        <position position="236"/>
    </location>
</feature>
<feature type="sequence conflict" description="In Ref. 1; AAD25103." evidence="3" ref="1">
    <original>G</original>
    <variation>S</variation>
    <location>
        <position position="263"/>
    </location>
</feature>
<feature type="sequence conflict" description="In Ref. 1; AAD25103." evidence="3" ref="1">
    <original>Q</original>
    <variation>P</variation>
    <location>
        <position position="278"/>
    </location>
</feature>
<feature type="sequence conflict" description="In Ref. 1; AAD25103." evidence="3" ref="1">
    <original>L</original>
    <variation>F</variation>
    <location>
        <position position="282"/>
    </location>
</feature>
<feature type="sequence conflict" description="In Ref. 1; AAD25103." evidence="3" ref="1">
    <original>N</original>
    <variation>I</variation>
    <location>
        <position position="286"/>
    </location>
</feature>
<keyword id="KW-0147">Chitin-binding</keyword>
<keyword id="KW-1015">Disulfide bond</keyword>
<keyword id="KW-0325">Glycoprotein</keyword>
<keyword id="KW-0677">Repeat</keyword>
<keyword id="KW-0732">Signal</keyword>
<name>PE48_CHRBE</name>
<sequence length="379" mass="40829">MKAKTLTATLALILLAFAQADYDVASYCQLVQSGTKLPSLDSCQNYYTCVSNGLPTLSSCSSGYVFNKDSQQCVPTGSFNCFFGVANPCQNQDKKFVPSAKQCNEWHYCLAGAIAGTGTCKEGQIFNFAKQSCVYGECSNTGNNILDSPNLSVCQIMPNGIYFGDNKNCSTWHKCSGMEEKKGTCPNGDNFDPTYASCVPSNMPACSRIQNPPSTGVVSGPPSTSPCSLGTVVGDLTSCSVYYKCENATRSNSTIWNTYTCSGQFFDVISKQCTSTNQARTLKGCNRCQFTTGSMYWVNAVDPQCSEYFTCSNGLETKSTASTCGAGNFFNEDLQYCMIGNSTVGQYAQTHGACENYTCNPNTRLCNLVTATNTTSSHR</sequence>
<proteinExistence type="evidence at transcript level"/>
<evidence type="ECO:0000255" key="1"/>
<evidence type="ECO:0000255" key="2">
    <source>
        <dbReference type="PROSITE-ProRule" id="PRU00144"/>
    </source>
</evidence>
<evidence type="ECO:0000305" key="3"/>
<comment type="function">
    <text>Binds chitin and may bind related oligosaccharide structures.</text>
</comment>
<comment type="tissue specificity">
    <text>Larval peritrophic membrane.</text>
</comment>
<comment type="PTM">
    <text>Glycosylated.</text>
</comment>
<protein>
    <recommendedName>
        <fullName>Peritrophin-48</fullName>
    </recommendedName>
</protein>
<reference key="1">
    <citation type="journal article" date="2001" name="Insect Biochem. Mol. Biol.">
        <title>Identification and molecular characterisation of a peritrophin gene, peritrophin-48, from the myiasis fly Chrysomya bezziana.</title>
        <authorList>
            <person name="Vuocolo T."/>
            <person name="Eisemann C.H."/>
            <person name="Pearson R.D."/>
            <person name="Willadsen P."/>
            <person name="Tellam R.L."/>
        </authorList>
    </citation>
    <scope>NUCLEOTIDE SEQUENCE [GENOMIC DNA / MRNA]</scope>
    <source>
        <tissue>Larval peritrophic membrane</tissue>
    </source>
</reference>
<organism>
    <name type="scientific">Chrysomya bezziana</name>
    <name type="common">Old world screw-worm fly</name>
    <dbReference type="NCBI Taxonomy" id="69364"/>
    <lineage>
        <taxon>Eukaryota</taxon>
        <taxon>Metazoa</taxon>
        <taxon>Ecdysozoa</taxon>
        <taxon>Arthropoda</taxon>
        <taxon>Hexapoda</taxon>
        <taxon>Insecta</taxon>
        <taxon>Pterygota</taxon>
        <taxon>Neoptera</taxon>
        <taxon>Endopterygota</taxon>
        <taxon>Diptera</taxon>
        <taxon>Brachycera</taxon>
        <taxon>Muscomorpha</taxon>
        <taxon>Oestroidea</taxon>
        <taxon>Calliphoridae</taxon>
        <taxon>Chrysomyinae</taxon>
        <taxon>Chrysomya</taxon>
    </lineage>
</organism>